<protein>
    <recommendedName>
        <fullName evidence="1">Ion-translocating oxidoreductase complex subunit E</fullName>
        <ecNumber evidence="1">7.-.-.-</ecNumber>
    </recommendedName>
    <alternativeName>
        <fullName evidence="1">Rnf electron transport complex subunit E</fullName>
    </alternativeName>
</protein>
<organism>
    <name type="scientific">Yersinia pseudotuberculosis serotype O:1b (strain IP 31758)</name>
    <dbReference type="NCBI Taxonomy" id="349747"/>
    <lineage>
        <taxon>Bacteria</taxon>
        <taxon>Pseudomonadati</taxon>
        <taxon>Pseudomonadota</taxon>
        <taxon>Gammaproteobacteria</taxon>
        <taxon>Enterobacterales</taxon>
        <taxon>Yersiniaceae</taxon>
        <taxon>Yersinia</taxon>
    </lineage>
</organism>
<evidence type="ECO:0000255" key="1">
    <source>
        <dbReference type="HAMAP-Rule" id="MF_00478"/>
    </source>
</evidence>
<name>RNFE_YERP3</name>
<keyword id="KW-0997">Cell inner membrane</keyword>
<keyword id="KW-1003">Cell membrane</keyword>
<keyword id="KW-0249">Electron transport</keyword>
<keyword id="KW-0472">Membrane</keyword>
<keyword id="KW-1278">Translocase</keyword>
<keyword id="KW-0812">Transmembrane</keyword>
<keyword id="KW-1133">Transmembrane helix</keyword>
<keyword id="KW-0813">Transport</keyword>
<gene>
    <name evidence="1" type="primary">rnfE</name>
    <name type="ordered locus">YpsIP31758_1900</name>
</gene>
<proteinExistence type="inferred from homology"/>
<feature type="chain" id="PRO_1000060410" description="Ion-translocating oxidoreductase complex subunit E">
    <location>
        <begin position="1"/>
        <end position="233"/>
    </location>
</feature>
<feature type="transmembrane region" description="Helical" evidence="1">
    <location>
        <begin position="18"/>
        <end position="38"/>
    </location>
</feature>
<feature type="transmembrane region" description="Helical" evidence="1">
    <location>
        <begin position="39"/>
        <end position="59"/>
    </location>
</feature>
<feature type="transmembrane region" description="Helical" evidence="1">
    <location>
        <begin position="69"/>
        <end position="89"/>
    </location>
</feature>
<feature type="transmembrane region" description="Helical" evidence="1">
    <location>
        <begin position="92"/>
        <end position="112"/>
    </location>
</feature>
<feature type="transmembrane region" description="Helical" evidence="1">
    <location>
        <begin position="128"/>
        <end position="148"/>
    </location>
</feature>
<feature type="transmembrane region" description="Helical" evidence="1">
    <location>
        <begin position="182"/>
        <end position="202"/>
    </location>
</feature>
<reference key="1">
    <citation type="journal article" date="2007" name="PLoS Genet.">
        <title>The complete genome sequence of Yersinia pseudotuberculosis IP31758, the causative agent of Far East scarlet-like fever.</title>
        <authorList>
            <person name="Eppinger M."/>
            <person name="Rosovitz M.J."/>
            <person name="Fricke W.F."/>
            <person name="Rasko D.A."/>
            <person name="Kokorina G."/>
            <person name="Fayolle C."/>
            <person name="Lindler L.E."/>
            <person name="Carniel E."/>
            <person name="Ravel J."/>
        </authorList>
    </citation>
    <scope>NUCLEOTIDE SEQUENCE [LARGE SCALE GENOMIC DNA]</scope>
    <source>
        <strain>IP 31758</strain>
    </source>
</reference>
<sequence length="233" mass="24587">MSEAKNLLAQGLWKNNSALVQLLGLCPLLAVSSTATNALGLGLATTLVLVCTNTAVSALRRWVPSEIRIPIYVMIIASVVSTVQMLINAYAFGLYQSLGIFIPLIVTNCIVIGRAEAYAAKNPVGLSALDGFAMGMGATCALFVLGALREILGNGTLFDGADMLLGSWATVLRIDILHLDTPFLLAMLPPGAFIGLGLLLAGKYVIDEKMKARKANTRVSVPQLQDGDAEKAL</sequence>
<accession>A7FHZ7</accession>
<comment type="function">
    <text evidence="1">Part of a membrane-bound complex that couples electron transfer with translocation of ions across the membrane.</text>
</comment>
<comment type="subunit">
    <text evidence="1">The complex is composed of six subunits: RnfA, RnfB, RnfC, RnfD, RnfE and RnfG.</text>
</comment>
<comment type="subcellular location">
    <subcellularLocation>
        <location evidence="1">Cell inner membrane</location>
        <topology evidence="1">Multi-pass membrane protein</topology>
    </subcellularLocation>
</comment>
<comment type="similarity">
    <text evidence="1">Belongs to the NqrDE/RnfAE family.</text>
</comment>
<dbReference type="EC" id="7.-.-.-" evidence="1"/>
<dbReference type="EMBL" id="CP000720">
    <property type="protein sequence ID" value="ABS48267.1"/>
    <property type="molecule type" value="Genomic_DNA"/>
</dbReference>
<dbReference type="RefSeq" id="WP_002210601.1">
    <property type="nucleotide sequence ID" value="NC_009708.1"/>
</dbReference>
<dbReference type="SMR" id="A7FHZ7"/>
<dbReference type="KEGG" id="ypi:YpsIP31758_1900"/>
<dbReference type="HOGENOM" id="CLU_046659_1_0_6"/>
<dbReference type="Proteomes" id="UP000002412">
    <property type="component" value="Chromosome"/>
</dbReference>
<dbReference type="GO" id="GO:0005886">
    <property type="term" value="C:plasma membrane"/>
    <property type="evidence" value="ECO:0007669"/>
    <property type="project" value="UniProtKB-SubCell"/>
</dbReference>
<dbReference type="GO" id="GO:0022900">
    <property type="term" value="P:electron transport chain"/>
    <property type="evidence" value="ECO:0007669"/>
    <property type="project" value="UniProtKB-UniRule"/>
</dbReference>
<dbReference type="HAMAP" id="MF_00478">
    <property type="entry name" value="RsxE_RnfE"/>
    <property type="match status" value="1"/>
</dbReference>
<dbReference type="InterPro" id="IPR003667">
    <property type="entry name" value="NqrDE/RnfAE"/>
</dbReference>
<dbReference type="InterPro" id="IPR010968">
    <property type="entry name" value="RnfE"/>
</dbReference>
<dbReference type="NCBIfam" id="NF009070">
    <property type="entry name" value="PRK12405.1"/>
    <property type="match status" value="1"/>
</dbReference>
<dbReference type="NCBIfam" id="TIGR01948">
    <property type="entry name" value="rnfE"/>
    <property type="match status" value="1"/>
</dbReference>
<dbReference type="PANTHER" id="PTHR30586">
    <property type="entry name" value="ELECTRON TRANSPORT COMPLEX PROTEIN RNFE"/>
    <property type="match status" value="1"/>
</dbReference>
<dbReference type="PANTHER" id="PTHR30586:SF0">
    <property type="entry name" value="ION-TRANSLOCATING OXIDOREDUCTASE COMPLEX SUBUNIT E"/>
    <property type="match status" value="1"/>
</dbReference>
<dbReference type="Pfam" id="PF02508">
    <property type="entry name" value="Rnf-Nqr"/>
    <property type="match status" value="1"/>
</dbReference>
<dbReference type="PIRSF" id="PIRSF006102">
    <property type="entry name" value="NQR_DE"/>
    <property type="match status" value="1"/>
</dbReference>